<evidence type="ECO:0000250" key="1">
    <source>
        <dbReference type="UniProtKB" id="P51513"/>
    </source>
</evidence>
<evidence type="ECO:0000250" key="2">
    <source>
        <dbReference type="UniProtKB" id="Q9JKN6"/>
    </source>
</evidence>
<evidence type="ECO:0000255" key="3"/>
<evidence type="ECO:0000255" key="4">
    <source>
        <dbReference type="PROSITE-ProRule" id="PRU00117"/>
    </source>
</evidence>
<evidence type="ECO:0000256" key="5">
    <source>
        <dbReference type="SAM" id="MobiDB-lite"/>
    </source>
</evidence>
<evidence type="ECO:0000303" key="6">
    <source ref="1"/>
</evidence>
<protein>
    <recommendedName>
        <fullName>RNA-binding protein Nova-1</fullName>
    </recommendedName>
    <alternativeName>
        <fullName>Neuro-oncological ventral antigen 1</fullName>
    </alternativeName>
    <alternativeName>
        <fullName>Ventral neuron-specific protein 1</fullName>
    </alternativeName>
</protein>
<name>NOVA1_MACFA</name>
<reference key="1">
    <citation type="submission" date="2005-06" db="EMBL/GenBank/DDBJ databases">
        <title>DNA sequences of macaque genes expressed in brain or testis and its evolutionary implications.</title>
        <authorList>
            <consortium name="International consortium for macaque cDNA sequencing and analysis"/>
        </authorList>
    </citation>
    <scope>NUCLEOTIDE SEQUENCE [LARGE SCALE MRNA] (ISOFORM 2)</scope>
    <source>
        <tissue>Testis</tissue>
    </source>
</reference>
<reference key="2">
    <citation type="submission" date="2005-07" db="EMBL/GenBank/DDBJ databases">
        <title>Analysis of gene expression in cynomolgus monkey tissues by macaque cDNA oligo-chips.</title>
        <authorList>
            <person name="Kobayashi M."/>
            <person name="Tanuma R."/>
            <person name="Hirata M."/>
            <person name="Osada N."/>
            <person name="Kusuda J."/>
            <person name="Sugano S."/>
            <person name="Hashimoto K."/>
        </authorList>
    </citation>
    <scope>NUCLEOTIDE SEQUENCE [LARGE SCALE MRNA] (ISOFORM 1)</scope>
    <source>
        <tissue>Frontal cortex</tissue>
    </source>
</reference>
<sequence length="483" mass="49267">MMAAAPIQQNGTHTGVPIDLDPPDSRKRPLEAPPEAGSTKRTNTGEDGQYFLKVLIPSYAAGSIIGKGGQTIVQLQKETGATIKLSKSKDFYPGTTERVCLIQGTVEALNAVHGFIAEKIREMPQNVAKTEPVSILQPQTTVNPDRIKQVKIIVPNSTAGLIIGKGGATVKAIMEQSGAWVQLSQKPDGINLQERVVTVSGEPEQNRKAVELIIQKIQEDPQSGSCLNISYANVTGPVANSNPTGSPYANTAEVLPTAAAAAGLLGHANLAGVAAFPAVLSGFTGNDLVAITSALNTLASYGYNLNTLGLGLSQAAATGALAAAAASANPAAAAANLLATYASEASASGSTAGGTAGTFALGSLAAATAATNGYFGAASPLAASAILGTEKSTDGSKDVVEIAVPENLVGAILGKGGKTLVEYQELTGARIQISKKGEFVPGTRNRKVTITGTPAATQAAQYLITQRITYEQGVRAANPQKVG</sequence>
<proteinExistence type="evidence at transcript level"/>
<dbReference type="EMBL" id="AB168696">
    <property type="protein sequence ID" value="BAE00807.1"/>
    <property type="molecule type" value="mRNA"/>
</dbReference>
<dbReference type="EMBL" id="AB220468">
    <property type="protein sequence ID" value="BAE73001.1"/>
    <property type="molecule type" value="mRNA"/>
</dbReference>
<dbReference type="RefSeq" id="NP_001274225.1">
    <property type="nucleotide sequence ID" value="NM_001287296.1"/>
</dbReference>
<dbReference type="RefSeq" id="XP_045252182.1">
    <molecule id="Q2PFW9-1"/>
    <property type="nucleotide sequence ID" value="XM_045396247.2"/>
</dbReference>
<dbReference type="SMR" id="Q2PFW9"/>
<dbReference type="STRING" id="9541.ENSMFAP00000006973"/>
<dbReference type="Ensembl" id="ENSMFAT00000077592.1">
    <molecule id="Q2PFW9-1"/>
    <property type="protein sequence ID" value="ENSMFAP00000052981.1"/>
    <property type="gene ID" value="ENSMFAG00000035425.2"/>
</dbReference>
<dbReference type="GeneID" id="102134094"/>
<dbReference type="VEuPathDB" id="HostDB:ENSMFAG00000035425"/>
<dbReference type="eggNOG" id="KOG2191">
    <property type="taxonomic scope" value="Eukaryota"/>
</dbReference>
<dbReference type="GeneTree" id="ENSGT00940000155573"/>
<dbReference type="OMA" id="KYANTPF"/>
<dbReference type="OrthoDB" id="441329at2759"/>
<dbReference type="Proteomes" id="UP000233100">
    <property type="component" value="Chromosome 7"/>
</dbReference>
<dbReference type="Bgee" id="ENSMFAG00000035425">
    <property type="expression patterns" value="Expressed in cerebellum and 8 other cell types or tissues"/>
</dbReference>
<dbReference type="GO" id="GO:0005634">
    <property type="term" value="C:nucleus"/>
    <property type="evidence" value="ECO:0000250"/>
    <property type="project" value="UniProtKB"/>
</dbReference>
<dbReference type="GO" id="GO:0003729">
    <property type="term" value="F:mRNA binding"/>
    <property type="evidence" value="ECO:0000250"/>
    <property type="project" value="UniProtKB"/>
</dbReference>
<dbReference type="GO" id="GO:0003723">
    <property type="term" value="F:RNA binding"/>
    <property type="evidence" value="ECO:0000250"/>
    <property type="project" value="UniProtKB"/>
</dbReference>
<dbReference type="GO" id="GO:1990825">
    <property type="term" value="F:sequence-specific mRNA binding"/>
    <property type="evidence" value="ECO:0000250"/>
    <property type="project" value="UniProtKB"/>
</dbReference>
<dbReference type="GO" id="GO:0006397">
    <property type="term" value="P:mRNA processing"/>
    <property type="evidence" value="ECO:0007669"/>
    <property type="project" value="UniProtKB-KW"/>
</dbReference>
<dbReference type="GO" id="GO:0007399">
    <property type="term" value="P:nervous system development"/>
    <property type="evidence" value="ECO:0007669"/>
    <property type="project" value="UniProtKB-KW"/>
</dbReference>
<dbReference type="GO" id="GO:0000381">
    <property type="term" value="P:regulation of alternative mRNA splicing, via spliceosome"/>
    <property type="evidence" value="ECO:0000250"/>
    <property type="project" value="UniProtKB"/>
</dbReference>
<dbReference type="GO" id="GO:0008380">
    <property type="term" value="P:RNA splicing"/>
    <property type="evidence" value="ECO:0007669"/>
    <property type="project" value="UniProtKB-KW"/>
</dbReference>
<dbReference type="CDD" id="cd22435">
    <property type="entry name" value="KH-I_NOVA_rpt1"/>
    <property type="match status" value="1"/>
</dbReference>
<dbReference type="CDD" id="cd22436">
    <property type="entry name" value="KH-I_NOVA_rpt2"/>
    <property type="match status" value="1"/>
</dbReference>
<dbReference type="CDD" id="cd09031">
    <property type="entry name" value="KH-I_NOVA_rpt3"/>
    <property type="match status" value="1"/>
</dbReference>
<dbReference type="FunFam" id="3.30.1370.10:FF:000019">
    <property type="entry name" value="RNA-binding protein Nova-1 isoform 1"/>
    <property type="match status" value="1"/>
</dbReference>
<dbReference type="FunFam" id="3.30.1370.10:FF:000020">
    <property type="entry name" value="RNA-binding protein Nova-1 isoform 1"/>
    <property type="match status" value="1"/>
</dbReference>
<dbReference type="FunFam" id="3.30.1370.10:FF:000022">
    <property type="entry name" value="RNA-binding protein Nova-1 isoform 1"/>
    <property type="match status" value="1"/>
</dbReference>
<dbReference type="Gene3D" id="3.30.1370.10">
    <property type="entry name" value="K Homology domain, type 1"/>
    <property type="match status" value="3"/>
</dbReference>
<dbReference type="InterPro" id="IPR047275">
    <property type="entry name" value="KH-I_NOVA_rpt1"/>
</dbReference>
<dbReference type="InterPro" id="IPR047276">
    <property type="entry name" value="KH-I_NOVA_rpt2"/>
</dbReference>
<dbReference type="InterPro" id="IPR047274">
    <property type="entry name" value="KH-I_NOVA_rpt3"/>
</dbReference>
<dbReference type="InterPro" id="IPR004087">
    <property type="entry name" value="KH_dom"/>
</dbReference>
<dbReference type="InterPro" id="IPR004088">
    <property type="entry name" value="KH_dom_type_1"/>
</dbReference>
<dbReference type="InterPro" id="IPR036612">
    <property type="entry name" value="KH_dom_type_1_sf"/>
</dbReference>
<dbReference type="PANTHER" id="PTHR10288">
    <property type="entry name" value="KH DOMAIN CONTAINING RNA BINDING PROTEIN"/>
    <property type="match status" value="1"/>
</dbReference>
<dbReference type="Pfam" id="PF00013">
    <property type="entry name" value="KH_1"/>
    <property type="match status" value="3"/>
</dbReference>
<dbReference type="SMART" id="SM00322">
    <property type="entry name" value="KH"/>
    <property type="match status" value="3"/>
</dbReference>
<dbReference type="SUPFAM" id="SSF54791">
    <property type="entry name" value="Eukaryotic type KH-domain (KH-domain type I)"/>
    <property type="match status" value="3"/>
</dbReference>
<dbReference type="PROSITE" id="PS50084">
    <property type="entry name" value="KH_TYPE_1"/>
    <property type="match status" value="3"/>
</dbReference>
<comment type="function">
    <text evidence="2">Functions to regulate alternative splicing in neurons by binding pre-mRNA in a sequence-specific manner to activate exon inclusion or exclusion. It binds specifically to the sequences 5'-YCAY-3' and regulates splicing in only a subset of regulated exons. Binding to an exonic 5'-YCAY-3' cluster changes the protein complexes assembled on pre-mRNA, blocking U1 snRNP binding and exon inclusion, whereas binding to an intronic 5'-YCAY-3' cluster enhances spliceosome assembly and exon inclusion. Binding to 5'-YCAY-3' clusters results in a local and asymmetric action to regulate spliceosome assembly and alternative splicing in neurons. Binding to an exonic 5'-YCAY-3' cluster changed the protein complexes assembled on pre-mRNA, blocking U1 snRNP (small nuclear ribonucleoprotein) binding and exon inclusion, whereas binding to an intronic 5'-YCAY-3' cluster enhanced spliceosome assembly and exon inclusion. With NOVA1, they perform unique biological functions in different brain areas and cell types. Autoregulates its own expression by acting as a splicing repressor. Acts to activate the inclusion of exon E3A in the glycine receptor alpha-2 chain and of exon E9 in gamma-aminobutyric-acid receptor gamma-2 subunit via a distal downstream UCAU-rich intronic splicing enhancer. Acts to regulate a novel glycine receptor alpha-2 chain splice variant (alpha-2N) in developing spinal cord.</text>
</comment>
<comment type="subunit">
    <text evidence="2">Interacts with PTBP2; the interaction is direct.</text>
</comment>
<comment type="subcellular location">
    <subcellularLocation>
        <location evidence="2">Nucleus</location>
    </subcellularLocation>
</comment>
<comment type="alternative products">
    <event type="alternative splicing"/>
    <isoform>
        <id>Q2PFW9-1</id>
        <name>1</name>
        <sequence type="displayed"/>
    </isoform>
    <isoform>
        <id>Q2PFW9-2</id>
        <name>2</name>
        <sequence type="described" ref="VSP_022134 VSP_022135"/>
    </isoform>
</comment>
<comment type="domain">
    <text evidence="1">The KH domain consists of approximately 70 amino acids and includes a conserved hydrophobic core, an invariant Gly-X-X-Gly motif, and an additional variable segment. The third KH domain (KH3) binds a hairpin RNA loop containing the 5'-UCAY-3' motif on targeted molecules. RNA binding by KH3 requires residues C-terminal to the KH domain.</text>
</comment>
<keyword id="KW-0025">Alternative splicing</keyword>
<keyword id="KW-0507">mRNA processing</keyword>
<keyword id="KW-0508">mRNA splicing</keyword>
<keyword id="KW-0524">Neurogenesis</keyword>
<keyword id="KW-0539">Nucleus</keyword>
<keyword id="KW-1185">Reference proteome</keyword>
<keyword id="KW-0677">Repeat</keyword>
<keyword id="KW-0694">RNA-binding</keyword>
<accession>Q2PFW9</accession>
<accession>Q4R7W5</accession>
<feature type="chain" id="PRO_0000270145" description="RNA-binding protein Nova-1">
    <location>
        <begin position="1"/>
        <end position="483"/>
    </location>
</feature>
<feature type="domain" description="KH 1" evidence="4">
    <location>
        <begin position="49"/>
        <end position="116"/>
    </location>
</feature>
<feature type="domain" description="KH 2" evidence="4">
    <location>
        <begin position="147"/>
        <end position="213"/>
    </location>
</feature>
<feature type="domain" description="KH 3" evidence="4">
    <location>
        <begin position="397"/>
        <end position="464"/>
    </location>
</feature>
<feature type="region of interest" description="Disordered" evidence="5">
    <location>
        <begin position="1"/>
        <end position="44"/>
    </location>
</feature>
<feature type="region of interest" description="Required for RNA binding" evidence="1">
    <location>
        <begin position="395"/>
        <end position="479"/>
    </location>
</feature>
<feature type="short sequence motif" description="Bipartite nuclear localization signal" evidence="3">
    <location>
        <begin position="27"/>
        <end position="43"/>
    </location>
</feature>
<feature type="splice variant" id="VSP_022134" description="In isoform 2." evidence="6">
    <location>
        <begin position="1"/>
        <end position="141"/>
    </location>
</feature>
<feature type="splice variant" id="VSP_022135" description="In isoform 2." evidence="6">
    <original>VNPDRIK</original>
    <variation>MTTSRAN</variation>
    <location>
        <begin position="142"/>
        <end position="148"/>
    </location>
</feature>
<gene>
    <name type="primary">NOVA1</name>
    <name type="ORF">QflA-17531</name>
    <name type="ORF">QtsA-14227</name>
</gene>
<organism>
    <name type="scientific">Macaca fascicularis</name>
    <name type="common">Crab-eating macaque</name>
    <name type="synonym">Cynomolgus monkey</name>
    <dbReference type="NCBI Taxonomy" id="9541"/>
    <lineage>
        <taxon>Eukaryota</taxon>
        <taxon>Metazoa</taxon>
        <taxon>Chordata</taxon>
        <taxon>Craniata</taxon>
        <taxon>Vertebrata</taxon>
        <taxon>Euteleostomi</taxon>
        <taxon>Mammalia</taxon>
        <taxon>Eutheria</taxon>
        <taxon>Euarchontoglires</taxon>
        <taxon>Primates</taxon>
        <taxon>Haplorrhini</taxon>
        <taxon>Catarrhini</taxon>
        <taxon>Cercopithecidae</taxon>
        <taxon>Cercopithecinae</taxon>
        <taxon>Macaca</taxon>
    </lineage>
</organism>